<evidence type="ECO:0000255" key="1">
    <source>
        <dbReference type="HAMAP-Rule" id="MF_00065"/>
    </source>
</evidence>
<keyword id="KW-0067">ATP-binding</keyword>
<keyword id="KW-0418">Kinase</keyword>
<keyword id="KW-0547">Nucleotide-binding</keyword>
<keyword id="KW-0597">Phosphoprotein</keyword>
<keyword id="KW-0808">Transferase</keyword>
<dbReference type="EC" id="2.7.1.25" evidence="1"/>
<dbReference type="EMBL" id="CP000560">
    <property type="protein sequence ID" value="ABS73906.1"/>
    <property type="molecule type" value="Genomic_DNA"/>
</dbReference>
<dbReference type="RefSeq" id="WP_007611313.1">
    <property type="nucleotide sequence ID" value="NC_009725.2"/>
</dbReference>
<dbReference type="SMR" id="A7Z4I0"/>
<dbReference type="GeneID" id="93080676"/>
<dbReference type="KEGG" id="bay:RBAM_015430"/>
<dbReference type="HOGENOM" id="CLU_046932_1_0_9"/>
<dbReference type="UniPathway" id="UPA00140">
    <property type="reaction ID" value="UER00205"/>
</dbReference>
<dbReference type="Proteomes" id="UP000001120">
    <property type="component" value="Chromosome"/>
</dbReference>
<dbReference type="GO" id="GO:0004020">
    <property type="term" value="F:adenylylsulfate kinase activity"/>
    <property type="evidence" value="ECO:0007669"/>
    <property type="project" value="UniProtKB-UniRule"/>
</dbReference>
<dbReference type="GO" id="GO:0005524">
    <property type="term" value="F:ATP binding"/>
    <property type="evidence" value="ECO:0007669"/>
    <property type="project" value="UniProtKB-UniRule"/>
</dbReference>
<dbReference type="GO" id="GO:0070814">
    <property type="term" value="P:hydrogen sulfide biosynthetic process"/>
    <property type="evidence" value="ECO:0007669"/>
    <property type="project" value="UniProtKB-UniRule"/>
</dbReference>
<dbReference type="GO" id="GO:0000103">
    <property type="term" value="P:sulfate assimilation"/>
    <property type="evidence" value="ECO:0007669"/>
    <property type="project" value="UniProtKB-UniRule"/>
</dbReference>
<dbReference type="CDD" id="cd02027">
    <property type="entry name" value="APSK"/>
    <property type="match status" value="1"/>
</dbReference>
<dbReference type="FunFam" id="3.40.50.300:FF:000212">
    <property type="entry name" value="Adenylyl-sulfate kinase"/>
    <property type="match status" value="1"/>
</dbReference>
<dbReference type="Gene3D" id="3.40.50.300">
    <property type="entry name" value="P-loop containing nucleotide triphosphate hydrolases"/>
    <property type="match status" value="1"/>
</dbReference>
<dbReference type="HAMAP" id="MF_00065">
    <property type="entry name" value="Adenylyl_sulf_kinase"/>
    <property type="match status" value="1"/>
</dbReference>
<dbReference type="InterPro" id="IPR002891">
    <property type="entry name" value="APS_kinase"/>
</dbReference>
<dbReference type="InterPro" id="IPR027417">
    <property type="entry name" value="P-loop_NTPase"/>
</dbReference>
<dbReference type="NCBIfam" id="TIGR00455">
    <property type="entry name" value="apsK"/>
    <property type="match status" value="1"/>
</dbReference>
<dbReference type="NCBIfam" id="NF003013">
    <property type="entry name" value="PRK03846.1"/>
    <property type="match status" value="1"/>
</dbReference>
<dbReference type="NCBIfam" id="NF004041">
    <property type="entry name" value="PRK05541.1"/>
    <property type="match status" value="1"/>
</dbReference>
<dbReference type="PANTHER" id="PTHR11055">
    <property type="entry name" value="BIFUNCTIONAL 3'-PHOSPHOADENOSINE 5'-PHOSPHOSULFATE SYNTHASE"/>
    <property type="match status" value="1"/>
</dbReference>
<dbReference type="PANTHER" id="PTHR11055:SF1">
    <property type="entry name" value="PAPS SYNTHETASE, ISOFORM D"/>
    <property type="match status" value="1"/>
</dbReference>
<dbReference type="Pfam" id="PF01583">
    <property type="entry name" value="APS_kinase"/>
    <property type="match status" value="1"/>
</dbReference>
<dbReference type="SUPFAM" id="SSF52540">
    <property type="entry name" value="P-loop containing nucleoside triphosphate hydrolases"/>
    <property type="match status" value="1"/>
</dbReference>
<sequence length="197" mass="22371">MTNRDIVWHEASITKEEYQQKNKHKSSILWLTGLSGSGKSTIANAAARELFEQGYQVIVLDGDNIRHGLNKDLGFSDDDRKENIRRIGEVAKLFVQQGTIVITAFISPFREDRDQVRELVAEGEFNEIYVKCDLDICEKRDPKGLYKKARNGEIPFFTGIDSPYEEPKAPELVLDSGKCEREECTGRLVDFVKNSLA</sequence>
<comment type="function">
    <text evidence="1">Catalyzes the synthesis of activated sulfate.</text>
</comment>
<comment type="catalytic activity">
    <reaction evidence="1">
        <text>adenosine 5'-phosphosulfate + ATP = 3'-phosphoadenylyl sulfate + ADP + H(+)</text>
        <dbReference type="Rhea" id="RHEA:24152"/>
        <dbReference type="ChEBI" id="CHEBI:15378"/>
        <dbReference type="ChEBI" id="CHEBI:30616"/>
        <dbReference type="ChEBI" id="CHEBI:58243"/>
        <dbReference type="ChEBI" id="CHEBI:58339"/>
        <dbReference type="ChEBI" id="CHEBI:456216"/>
        <dbReference type="EC" id="2.7.1.25"/>
    </reaction>
</comment>
<comment type="pathway">
    <text evidence="1">Sulfur metabolism; hydrogen sulfide biosynthesis; sulfite from sulfate: step 2/3.</text>
</comment>
<comment type="similarity">
    <text evidence="1">Belongs to the APS kinase family.</text>
</comment>
<reference key="1">
    <citation type="journal article" date="2007" name="Nat. Biotechnol.">
        <title>Comparative analysis of the complete genome sequence of the plant growth-promoting bacterium Bacillus amyloliquefaciens FZB42.</title>
        <authorList>
            <person name="Chen X.H."/>
            <person name="Koumoutsi A."/>
            <person name="Scholz R."/>
            <person name="Eisenreich A."/>
            <person name="Schneider K."/>
            <person name="Heinemeyer I."/>
            <person name="Morgenstern B."/>
            <person name="Voss B."/>
            <person name="Hess W.R."/>
            <person name="Reva O."/>
            <person name="Junge H."/>
            <person name="Voigt B."/>
            <person name="Jungblut P.R."/>
            <person name="Vater J."/>
            <person name="Suessmuth R."/>
            <person name="Liesegang H."/>
            <person name="Strittmatter A."/>
            <person name="Gottschalk G."/>
            <person name="Borriss R."/>
        </authorList>
    </citation>
    <scope>NUCLEOTIDE SEQUENCE [LARGE SCALE GENOMIC DNA]</scope>
    <source>
        <strain>DSM 23117 / BGSC 10A6 / LMG 26770 / FZB42</strain>
    </source>
</reference>
<organism>
    <name type="scientific">Bacillus velezensis (strain DSM 23117 / BGSC 10A6 / LMG 26770 / FZB42)</name>
    <name type="common">Bacillus amyloliquefaciens subsp. plantarum</name>
    <dbReference type="NCBI Taxonomy" id="326423"/>
    <lineage>
        <taxon>Bacteria</taxon>
        <taxon>Bacillati</taxon>
        <taxon>Bacillota</taxon>
        <taxon>Bacilli</taxon>
        <taxon>Bacillales</taxon>
        <taxon>Bacillaceae</taxon>
        <taxon>Bacillus</taxon>
        <taxon>Bacillus amyloliquefaciens group</taxon>
    </lineage>
</organism>
<protein>
    <recommendedName>
        <fullName evidence="1">Adenylyl-sulfate kinase</fullName>
        <ecNumber evidence="1">2.7.1.25</ecNumber>
    </recommendedName>
    <alternativeName>
        <fullName evidence="1">APS kinase</fullName>
    </alternativeName>
    <alternativeName>
        <fullName evidence="1">ATP adenosine-5'-phosphosulfate 3'-phosphotransferase</fullName>
    </alternativeName>
    <alternativeName>
        <fullName evidence="1">Adenosine-5'-phosphosulfate kinase</fullName>
    </alternativeName>
</protein>
<feature type="chain" id="PRO_1000009006" description="Adenylyl-sulfate kinase">
    <location>
        <begin position="1"/>
        <end position="197"/>
    </location>
</feature>
<feature type="active site" description="Phosphoserine intermediate" evidence="1">
    <location>
        <position position="107"/>
    </location>
</feature>
<feature type="binding site" evidence="1">
    <location>
        <begin position="33"/>
        <end position="40"/>
    </location>
    <ligand>
        <name>ATP</name>
        <dbReference type="ChEBI" id="CHEBI:30616"/>
    </ligand>
</feature>
<gene>
    <name evidence="1" type="primary">cysC</name>
    <name type="ordered locus">RBAM_015430</name>
</gene>
<proteinExistence type="inferred from homology"/>
<name>CYSC_BACVZ</name>
<accession>A7Z4I0</accession>